<organism>
    <name type="scientific">Salmonella typhi</name>
    <dbReference type="NCBI Taxonomy" id="90370"/>
    <lineage>
        <taxon>Bacteria</taxon>
        <taxon>Pseudomonadati</taxon>
        <taxon>Pseudomonadota</taxon>
        <taxon>Gammaproteobacteria</taxon>
        <taxon>Enterobacterales</taxon>
        <taxon>Enterobacteriaceae</taxon>
        <taxon>Salmonella</taxon>
    </lineage>
</organism>
<gene>
    <name evidence="1" type="primary">rplA</name>
    <name type="ordered locus">STY3735</name>
    <name type="ordered locus">t3477</name>
</gene>
<keyword id="KW-0678">Repressor</keyword>
<keyword id="KW-0687">Ribonucleoprotein</keyword>
<keyword id="KW-0689">Ribosomal protein</keyword>
<keyword id="KW-0694">RNA-binding</keyword>
<keyword id="KW-0699">rRNA-binding</keyword>
<keyword id="KW-0810">Translation regulation</keyword>
<keyword id="KW-0820">tRNA-binding</keyword>
<comment type="function">
    <text evidence="1">Binds directly to 23S rRNA. The L1 stalk is quite mobile in the ribosome, and is involved in E site tRNA release.</text>
</comment>
<comment type="function">
    <text evidence="1">Protein L1 is also a translational repressor protein, it controls the translation of the L11 operon by binding to its mRNA.</text>
</comment>
<comment type="subunit">
    <text evidence="1">Part of the 50S ribosomal subunit.</text>
</comment>
<comment type="similarity">
    <text evidence="1">Belongs to the universal ribosomal protein uL1 family.</text>
</comment>
<proteinExistence type="inferred from homology"/>
<dbReference type="EMBL" id="AL513382">
    <property type="protein sequence ID" value="CAD09490.1"/>
    <property type="molecule type" value="Genomic_DNA"/>
</dbReference>
<dbReference type="EMBL" id="AE014613">
    <property type="protein sequence ID" value="AAO70993.1"/>
    <property type="molecule type" value="Genomic_DNA"/>
</dbReference>
<dbReference type="RefSeq" id="NP_457920.1">
    <property type="nucleotide sequence ID" value="NC_003198.1"/>
</dbReference>
<dbReference type="RefSeq" id="WP_001096676.1">
    <property type="nucleotide sequence ID" value="NZ_WSUR01000043.1"/>
</dbReference>
<dbReference type="SMR" id="P0A2A4"/>
<dbReference type="STRING" id="220341.gene:17587591"/>
<dbReference type="KEGG" id="stt:t3477"/>
<dbReference type="KEGG" id="sty:STY3735"/>
<dbReference type="PATRIC" id="fig|220341.7.peg.3808"/>
<dbReference type="eggNOG" id="COG0081">
    <property type="taxonomic scope" value="Bacteria"/>
</dbReference>
<dbReference type="HOGENOM" id="CLU_062853_0_0_6"/>
<dbReference type="OMA" id="EFRVDKH"/>
<dbReference type="OrthoDB" id="9803740at2"/>
<dbReference type="Proteomes" id="UP000000541">
    <property type="component" value="Chromosome"/>
</dbReference>
<dbReference type="Proteomes" id="UP000002670">
    <property type="component" value="Chromosome"/>
</dbReference>
<dbReference type="GO" id="GO:0022625">
    <property type="term" value="C:cytosolic large ribosomal subunit"/>
    <property type="evidence" value="ECO:0007669"/>
    <property type="project" value="TreeGrafter"/>
</dbReference>
<dbReference type="GO" id="GO:0019843">
    <property type="term" value="F:rRNA binding"/>
    <property type="evidence" value="ECO:0007669"/>
    <property type="project" value="UniProtKB-UniRule"/>
</dbReference>
<dbReference type="GO" id="GO:0003735">
    <property type="term" value="F:structural constituent of ribosome"/>
    <property type="evidence" value="ECO:0007669"/>
    <property type="project" value="InterPro"/>
</dbReference>
<dbReference type="GO" id="GO:0000049">
    <property type="term" value="F:tRNA binding"/>
    <property type="evidence" value="ECO:0007669"/>
    <property type="project" value="UniProtKB-KW"/>
</dbReference>
<dbReference type="GO" id="GO:0006417">
    <property type="term" value="P:regulation of translation"/>
    <property type="evidence" value="ECO:0007669"/>
    <property type="project" value="UniProtKB-KW"/>
</dbReference>
<dbReference type="GO" id="GO:0006412">
    <property type="term" value="P:translation"/>
    <property type="evidence" value="ECO:0007669"/>
    <property type="project" value="UniProtKB-UniRule"/>
</dbReference>
<dbReference type="CDD" id="cd00403">
    <property type="entry name" value="Ribosomal_L1"/>
    <property type="match status" value="1"/>
</dbReference>
<dbReference type="FunFam" id="3.40.50.790:FF:000001">
    <property type="entry name" value="50S ribosomal protein L1"/>
    <property type="match status" value="1"/>
</dbReference>
<dbReference type="Gene3D" id="3.30.190.20">
    <property type="match status" value="1"/>
</dbReference>
<dbReference type="Gene3D" id="3.40.50.790">
    <property type="match status" value="1"/>
</dbReference>
<dbReference type="HAMAP" id="MF_01318_B">
    <property type="entry name" value="Ribosomal_uL1_B"/>
    <property type="match status" value="1"/>
</dbReference>
<dbReference type="InterPro" id="IPR005878">
    <property type="entry name" value="Ribosom_uL1_bac-type"/>
</dbReference>
<dbReference type="InterPro" id="IPR002143">
    <property type="entry name" value="Ribosomal_uL1"/>
</dbReference>
<dbReference type="InterPro" id="IPR023674">
    <property type="entry name" value="Ribosomal_uL1-like"/>
</dbReference>
<dbReference type="InterPro" id="IPR028364">
    <property type="entry name" value="Ribosomal_uL1/biogenesis"/>
</dbReference>
<dbReference type="InterPro" id="IPR016095">
    <property type="entry name" value="Ribosomal_uL1_3-a/b-sand"/>
</dbReference>
<dbReference type="InterPro" id="IPR023673">
    <property type="entry name" value="Ribosomal_uL1_CS"/>
</dbReference>
<dbReference type="NCBIfam" id="TIGR01169">
    <property type="entry name" value="rplA_bact"/>
    <property type="match status" value="1"/>
</dbReference>
<dbReference type="PANTHER" id="PTHR36427">
    <property type="entry name" value="54S RIBOSOMAL PROTEIN L1, MITOCHONDRIAL"/>
    <property type="match status" value="1"/>
</dbReference>
<dbReference type="PANTHER" id="PTHR36427:SF3">
    <property type="entry name" value="LARGE RIBOSOMAL SUBUNIT PROTEIN UL1M"/>
    <property type="match status" value="1"/>
</dbReference>
<dbReference type="Pfam" id="PF00687">
    <property type="entry name" value="Ribosomal_L1"/>
    <property type="match status" value="1"/>
</dbReference>
<dbReference type="PIRSF" id="PIRSF002155">
    <property type="entry name" value="Ribosomal_L1"/>
    <property type="match status" value="1"/>
</dbReference>
<dbReference type="SUPFAM" id="SSF56808">
    <property type="entry name" value="Ribosomal protein L1"/>
    <property type="match status" value="1"/>
</dbReference>
<dbReference type="PROSITE" id="PS01199">
    <property type="entry name" value="RIBOSOMAL_L1"/>
    <property type="match status" value="1"/>
</dbReference>
<name>RL1_SALTI</name>
<sequence length="234" mass="24729">MAKLTKRMRVIREKVDATKQYDINEAIALLKELATAKFNESVDVAVNLGIDARKSDQNVRGATVLPHGTGRSVRVAVFTQGPNAEAAKAAGAELVGMEDLADQIKKGEMNFDVVIASPDAMRVVGQLGQVLGPRGLMPNPKVGTVTPNVAEAVKNAKAGQVRYRNDKNGIIHTTIGKVDFDADKLKENLEALLVALKKAKPSQAKGVYIKKVSISTTMGAGVAVDQAGLSASAN</sequence>
<protein>
    <recommendedName>
        <fullName evidence="1">Large ribosomal subunit protein uL1</fullName>
    </recommendedName>
    <alternativeName>
        <fullName evidence="2">50S ribosomal protein L1</fullName>
    </alternativeName>
</protein>
<reference key="1">
    <citation type="journal article" date="2001" name="Nature">
        <title>Complete genome sequence of a multiple drug resistant Salmonella enterica serovar Typhi CT18.</title>
        <authorList>
            <person name="Parkhill J."/>
            <person name="Dougan G."/>
            <person name="James K.D."/>
            <person name="Thomson N.R."/>
            <person name="Pickard D."/>
            <person name="Wain J."/>
            <person name="Churcher C.M."/>
            <person name="Mungall K.L."/>
            <person name="Bentley S.D."/>
            <person name="Holden M.T.G."/>
            <person name="Sebaihia M."/>
            <person name="Baker S."/>
            <person name="Basham D."/>
            <person name="Brooks K."/>
            <person name="Chillingworth T."/>
            <person name="Connerton P."/>
            <person name="Cronin A."/>
            <person name="Davis P."/>
            <person name="Davies R.M."/>
            <person name="Dowd L."/>
            <person name="White N."/>
            <person name="Farrar J."/>
            <person name="Feltwell T."/>
            <person name="Hamlin N."/>
            <person name="Haque A."/>
            <person name="Hien T.T."/>
            <person name="Holroyd S."/>
            <person name="Jagels K."/>
            <person name="Krogh A."/>
            <person name="Larsen T.S."/>
            <person name="Leather S."/>
            <person name="Moule S."/>
            <person name="O'Gaora P."/>
            <person name="Parry C."/>
            <person name="Quail M.A."/>
            <person name="Rutherford K.M."/>
            <person name="Simmonds M."/>
            <person name="Skelton J."/>
            <person name="Stevens K."/>
            <person name="Whitehead S."/>
            <person name="Barrell B.G."/>
        </authorList>
    </citation>
    <scope>NUCLEOTIDE SEQUENCE [LARGE SCALE GENOMIC DNA]</scope>
    <source>
        <strain>CT18</strain>
    </source>
</reference>
<reference key="2">
    <citation type="journal article" date="2003" name="J. Bacteriol.">
        <title>Comparative genomics of Salmonella enterica serovar Typhi strains Ty2 and CT18.</title>
        <authorList>
            <person name="Deng W."/>
            <person name="Liou S.-R."/>
            <person name="Plunkett G. III"/>
            <person name="Mayhew G.F."/>
            <person name="Rose D.J."/>
            <person name="Burland V."/>
            <person name="Kodoyianni V."/>
            <person name="Schwartz D.C."/>
            <person name="Blattner F.R."/>
        </authorList>
    </citation>
    <scope>NUCLEOTIDE SEQUENCE [LARGE SCALE GENOMIC DNA]</scope>
    <source>
        <strain>ATCC 700931 / Ty2</strain>
    </source>
</reference>
<evidence type="ECO:0000255" key="1">
    <source>
        <dbReference type="HAMAP-Rule" id="MF_01318"/>
    </source>
</evidence>
<evidence type="ECO:0000305" key="2"/>
<feature type="chain" id="PRO_0000125725" description="Large ribosomal subunit protein uL1">
    <location>
        <begin position="1"/>
        <end position="234"/>
    </location>
</feature>
<accession>P0A2A4</accession>
<accession>Q9L9J9</accession>